<name>RCR1_YEAST</name>
<comment type="function">
    <text evidence="3">Regulates chitin deposition in the cell wall.</text>
</comment>
<comment type="subunit">
    <text evidence="4">Interacts with PMT4 and WW domain of RSP5.</text>
</comment>
<comment type="interaction">
    <interactant intactId="EBI-21381">
        <id>P38212</id>
    </interactant>
    <interactant intactId="EBI-16219">
        <id>P39940</id>
        <label>RSP5</label>
    </interactant>
    <organismsDiffer>false</organismsDiffer>
    <experiments>3</experiments>
</comment>
<comment type="subcellular location">
    <subcellularLocation>
        <location evidence="3">Endoplasmic reticulum membrane</location>
        <topology evidence="3">Single-pass type I membrane protein</topology>
    </subcellularLocation>
</comment>
<comment type="domain">
    <text>Transmembrane domain is required, and the cytoplasmic region conserved between RCR1 and RCR2 is also essential, to endow resistance to Congo red.</text>
</comment>
<comment type="domain">
    <text>The PY motif is recognized directly by the WW domains of RSP5.</text>
</comment>
<dbReference type="EMBL" id="Z35874">
    <property type="protein sequence ID" value="CAA84941.1"/>
    <property type="molecule type" value="Genomic_DNA"/>
</dbReference>
<dbReference type="EMBL" id="AY692680">
    <property type="protein sequence ID" value="AAT92699.1"/>
    <property type="molecule type" value="Genomic_DNA"/>
</dbReference>
<dbReference type="EMBL" id="BK006936">
    <property type="protein sequence ID" value="DAA07126.1"/>
    <property type="molecule type" value="Genomic_DNA"/>
</dbReference>
<dbReference type="PIR" id="S45857">
    <property type="entry name" value="S45857"/>
</dbReference>
<dbReference type="RefSeq" id="NP_009559.1">
    <property type="nucleotide sequence ID" value="NM_001178353.1"/>
</dbReference>
<dbReference type="SMR" id="P38212"/>
<dbReference type="BioGRID" id="32706">
    <property type="interactions" value="78"/>
</dbReference>
<dbReference type="FunCoup" id="P38212">
    <property type="interactions" value="68"/>
</dbReference>
<dbReference type="IntAct" id="P38212">
    <property type="interactions" value="2"/>
</dbReference>
<dbReference type="STRING" id="4932.YBR005W"/>
<dbReference type="iPTMnet" id="P38212"/>
<dbReference type="PaxDb" id="4932-YBR005W"/>
<dbReference type="PeptideAtlas" id="P38212"/>
<dbReference type="EnsemblFungi" id="YBR005W_mRNA">
    <property type="protein sequence ID" value="YBR005W"/>
    <property type="gene ID" value="YBR005W"/>
</dbReference>
<dbReference type="GeneID" id="852290"/>
<dbReference type="KEGG" id="sce:YBR005W"/>
<dbReference type="AGR" id="SGD:S000000209"/>
<dbReference type="SGD" id="S000000209">
    <property type="gene designation" value="RCR1"/>
</dbReference>
<dbReference type="VEuPathDB" id="FungiDB:YBR005W"/>
<dbReference type="eggNOG" id="ENOG502S7RD">
    <property type="taxonomic scope" value="Eukaryota"/>
</dbReference>
<dbReference type="GeneTree" id="ENSGT00940000176721"/>
<dbReference type="HOGENOM" id="CLU_078289_2_1_1"/>
<dbReference type="InParanoid" id="P38212"/>
<dbReference type="OMA" id="ESWKWAR"/>
<dbReference type="OrthoDB" id="4088875at2759"/>
<dbReference type="BioCyc" id="YEAST:G3O-28993-MONOMER"/>
<dbReference type="BioGRID-ORCS" id="852290">
    <property type="hits" value="2 hits in 10 CRISPR screens"/>
</dbReference>
<dbReference type="PRO" id="PR:P38212"/>
<dbReference type="Proteomes" id="UP000002311">
    <property type="component" value="Chromosome II"/>
</dbReference>
<dbReference type="RNAct" id="P38212">
    <property type="molecule type" value="protein"/>
</dbReference>
<dbReference type="GO" id="GO:0005789">
    <property type="term" value="C:endoplasmic reticulum membrane"/>
    <property type="evidence" value="ECO:0000314"/>
    <property type="project" value="SGD"/>
</dbReference>
<dbReference type="GO" id="GO:0043231">
    <property type="term" value="C:intracellular membrane-bounded organelle"/>
    <property type="evidence" value="ECO:0000318"/>
    <property type="project" value="GO_Central"/>
</dbReference>
<dbReference type="GO" id="GO:0005886">
    <property type="term" value="C:plasma membrane"/>
    <property type="evidence" value="ECO:0000314"/>
    <property type="project" value="SGD"/>
</dbReference>
<dbReference type="GO" id="GO:0043495">
    <property type="term" value="F:protein-membrane adaptor activity"/>
    <property type="evidence" value="ECO:0000314"/>
    <property type="project" value="SGD"/>
</dbReference>
<dbReference type="GO" id="GO:0071555">
    <property type="term" value="P:cell wall organization"/>
    <property type="evidence" value="ECO:0007669"/>
    <property type="project" value="UniProtKB-KW"/>
</dbReference>
<dbReference type="GO" id="GO:0006033">
    <property type="term" value="P:chitin localization"/>
    <property type="evidence" value="ECO:0000315"/>
    <property type="project" value="SGD"/>
</dbReference>
<dbReference type="GO" id="GO:0072659">
    <property type="term" value="P:protein localization to plasma membrane"/>
    <property type="evidence" value="ECO:0000314"/>
    <property type="project" value="SGD"/>
</dbReference>
<dbReference type="GO" id="GO:0016192">
    <property type="term" value="P:vesicle-mediated transport"/>
    <property type="evidence" value="ECO:0000316"/>
    <property type="project" value="SGD"/>
</dbReference>
<dbReference type="InterPro" id="IPR020999">
    <property type="entry name" value="Chitin_synth_reg_RCR"/>
</dbReference>
<dbReference type="PANTHER" id="PTHR28187">
    <property type="entry name" value="PROTEIN RCR1-RELATED"/>
    <property type="match status" value="1"/>
</dbReference>
<dbReference type="PANTHER" id="PTHR28187:SF1">
    <property type="entry name" value="PROTEIN RCR1-RELATED"/>
    <property type="match status" value="1"/>
</dbReference>
<dbReference type="Pfam" id="PF12273">
    <property type="entry name" value="RCR"/>
    <property type="match status" value="1"/>
</dbReference>
<gene>
    <name type="primary">RCR1</name>
    <name type="ordered locus">YBR005W</name>
    <name type="ORF">YBR0111</name>
</gene>
<organism>
    <name type="scientific">Saccharomyces cerevisiae (strain ATCC 204508 / S288c)</name>
    <name type="common">Baker's yeast</name>
    <dbReference type="NCBI Taxonomy" id="559292"/>
    <lineage>
        <taxon>Eukaryota</taxon>
        <taxon>Fungi</taxon>
        <taxon>Dikarya</taxon>
        <taxon>Ascomycota</taxon>
        <taxon>Saccharomycotina</taxon>
        <taxon>Saccharomycetes</taxon>
        <taxon>Saccharomycetales</taxon>
        <taxon>Saccharomycetaceae</taxon>
        <taxon>Saccharomyces</taxon>
    </lineage>
</organism>
<evidence type="ECO:0000255" key="1"/>
<evidence type="ECO:0000256" key="2">
    <source>
        <dbReference type="SAM" id="MobiDB-lite"/>
    </source>
</evidence>
<evidence type="ECO:0000269" key="3">
    <source>
    </source>
</evidence>
<evidence type="ECO:0000269" key="4">
    <source>
    </source>
</evidence>
<keyword id="KW-0961">Cell wall biogenesis/degradation</keyword>
<keyword id="KW-0256">Endoplasmic reticulum</keyword>
<keyword id="KW-0472">Membrane</keyword>
<keyword id="KW-1185">Reference proteome</keyword>
<keyword id="KW-0812">Transmembrane</keyword>
<keyword id="KW-1133">Transmembrane helix</keyword>
<sequence>MGLISYENEAINEVKKADNHHVSKFVTSYYGPSSSSWQSGIWILFVLFVAAVILIILFTFVANRRRRRMGRAPIRGTAWLTPPSYRQSQQQYTGTVQQRTDDYVPEYTETANEHDLGYYDQRGEFHPNDKAAYVAPPPLVQECSSESVNSLERPPAAVVHQANSLDTDYGLTRPSNGRVPAVSDTVEQLERLPGGTTTQEINPPERAKVNARS</sequence>
<proteinExistence type="evidence at protein level"/>
<reference key="1">
    <citation type="journal article" date="1994" name="EMBO J.">
        <title>Complete DNA sequence of yeast chromosome II.</title>
        <authorList>
            <person name="Feldmann H."/>
            <person name="Aigle M."/>
            <person name="Aljinovic G."/>
            <person name="Andre B."/>
            <person name="Baclet M.C."/>
            <person name="Barthe C."/>
            <person name="Baur A."/>
            <person name="Becam A.-M."/>
            <person name="Biteau N."/>
            <person name="Boles E."/>
            <person name="Brandt T."/>
            <person name="Brendel M."/>
            <person name="Brueckner M."/>
            <person name="Bussereau F."/>
            <person name="Christiansen C."/>
            <person name="Contreras R."/>
            <person name="Crouzet M."/>
            <person name="Cziepluch C."/>
            <person name="Demolis N."/>
            <person name="Delaveau T."/>
            <person name="Doignon F."/>
            <person name="Domdey H."/>
            <person name="Duesterhus S."/>
            <person name="Dubois E."/>
            <person name="Dujon B."/>
            <person name="El Bakkoury M."/>
            <person name="Entian K.-D."/>
            <person name="Feuermann M."/>
            <person name="Fiers W."/>
            <person name="Fobo G.M."/>
            <person name="Fritz C."/>
            <person name="Gassenhuber J."/>
            <person name="Glansdorff N."/>
            <person name="Goffeau A."/>
            <person name="Grivell L.A."/>
            <person name="de Haan M."/>
            <person name="Hein C."/>
            <person name="Herbert C.J."/>
            <person name="Hollenberg C.P."/>
            <person name="Holmstroem K."/>
            <person name="Jacq C."/>
            <person name="Jacquet M."/>
            <person name="Jauniaux J.-C."/>
            <person name="Jonniaux J.-L."/>
            <person name="Kallesoee T."/>
            <person name="Kiesau P."/>
            <person name="Kirchrath L."/>
            <person name="Koetter P."/>
            <person name="Korol S."/>
            <person name="Liebl S."/>
            <person name="Logghe M."/>
            <person name="Lohan A.J.E."/>
            <person name="Louis E.J."/>
            <person name="Li Z.Y."/>
            <person name="Maat M.J."/>
            <person name="Mallet L."/>
            <person name="Mannhaupt G."/>
            <person name="Messenguy F."/>
            <person name="Miosga T."/>
            <person name="Molemans F."/>
            <person name="Mueller S."/>
            <person name="Nasr F."/>
            <person name="Obermaier B."/>
            <person name="Perea J."/>
            <person name="Pierard A."/>
            <person name="Piravandi E."/>
            <person name="Pohl F.M."/>
            <person name="Pohl T.M."/>
            <person name="Potier S."/>
            <person name="Proft M."/>
            <person name="Purnelle B."/>
            <person name="Ramezani Rad M."/>
            <person name="Rieger M."/>
            <person name="Rose M."/>
            <person name="Schaaff-Gerstenschlaeger I."/>
            <person name="Scherens B."/>
            <person name="Schwarzlose C."/>
            <person name="Skala J."/>
            <person name="Slonimski P.P."/>
            <person name="Smits P.H.M."/>
            <person name="Souciet J.-L."/>
            <person name="Steensma H.Y."/>
            <person name="Stucka R."/>
            <person name="Urrestarazu L.A."/>
            <person name="van der Aart Q.J.M."/>
            <person name="Van Dyck L."/>
            <person name="Vassarotti A."/>
            <person name="Vetter I."/>
            <person name="Vierendeels F."/>
            <person name="Vissers S."/>
            <person name="Wagner G."/>
            <person name="de Wergifosse P."/>
            <person name="Wolfe K.H."/>
            <person name="Zagulski M."/>
            <person name="Zimmermann F.K."/>
            <person name="Mewes H.-W."/>
            <person name="Kleine K."/>
        </authorList>
    </citation>
    <scope>NUCLEOTIDE SEQUENCE [LARGE SCALE GENOMIC DNA]</scope>
    <source>
        <strain>ATCC 204508 / S288c</strain>
    </source>
</reference>
<reference key="2">
    <citation type="journal article" date="2014" name="G3 (Bethesda)">
        <title>The reference genome sequence of Saccharomyces cerevisiae: Then and now.</title>
        <authorList>
            <person name="Engel S.R."/>
            <person name="Dietrich F.S."/>
            <person name="Fisk D.G."/>
            <person name="Binkley G."/>
            <person name="Balakrishnan R."/>
            <person name="Costanzo M.C."/>
            <person name="Dwight S.S."/>
            <person name="Hitz B.C."/>
            <person name="Karra K."/>
            <person name="Nash R.S."/>
            <person name="Weng S."/>
            <person name="Wong E.D."/>
            <person name="Lloyd P."/>
            <person name="Skrzypek M.S."/>
            <person name="Miyasato S.R."/>
            <person name="Simison M."/>
            <person name="Cherry J.M."/>
        </authorList>
    </citation>
    <scope>GENOME REANNOTATION</scope>
    <source>
        <strain>ATCC 204508 / S288c</strain>
    </source>
</reference>
<reference key="3">
    <citation type="journal article" date="2007" name="Genome Res.">
        <title>Approaching a complete repository of sequence-verified protein-encoding clones for Saccharomyces cerevisiae.</title>
        <authorList>
            <person name="Hu Y."/>
            <person name="Rolfs A."/>
            <person name="Bhullar B."/>
            <person name="Murthy T.V.S."/>
            <person name="Zhu C."/>
            <person name="Berger M.F."/>
            <person name="Camargo A.A."/>
            <person name="Kelley F."/>
            <person name="McCarron S."/>
            <person name="Jepson D."/>
            <person name="Richardson A."/>
            <person name="Raphael J."/>
            <person name="Moreira D."/>
            <person name="Taycher E."/>
            <person name="Zuo D."/>
            <person name="Mohr S."/>
            <person name="Kane M.F."/>
            <person name="Williamson J."/>
            <person name="Simpson A.J.G."/>
            <person name="Bulyk M.L."/>
            <person name="Harlow E."/>
            <person name="Marsischky G."/>
            <person name="Kolodner R.D."/>
            <person name="LaBaer J."/>
        </authorList>
    </citation>
    <scope>NUCLEOTIDE SEQUENCE [GENOMIC DNA]</scope>
    <source>
        <strain>ATCC 204508 / S288c</strain>
    </source>
</reference>
<reference key="4">
    <citation type="journal article" date="2005" name="J. Biol. Chem.">
        <title>A novel endoplasmic reticulum membrane protein Rcr1 regulates chitin deposition in the cell wall of Saccharomyces cerevisiae.</title>
        <authorList>
            <person name="Imai K."/>
            <person name="Noda Y."/>
            <person name="Adachi H."/>
            <person name="Yoda K."/>
        </authorList>
    </citation>
    <scope>FUNCTION</scope>
    <scope>SUBCELLULAR LOCATION</scope>
    <scope>TOPOLOGY</scope>
</reference>
<reference key="5">
    <citation type="journal article" date="2007" name="Biosci. Biotechnol. Biochem.">
        <title>Peculiar protein-protein interactions of the novel endoplasmic reticulum membrane protein Rcr1 and ubiquitin ligase Rsp5.</title>
        <authorList>
            <person name="Imai K."/>
            <person name="Noda Y."/>
            <person name="Adachi H."/>
            <person name="Yoda K."/>
        </authorList>
    </citation>
    <scope>INTERACTION WITH PMT4 AND RSP5</scope>
    <scope>MUTAGENESIS OF 82-PRO-PRO-83; PRO-105; LYS-130 AND LYS-208</scope>
</reference>
<protein>
    <recommendedName>
        <fullName>Protein RCR1</fullName>
    </recommendedName>
    <alternativeName>
        <fullName>Resistance to Congo red protein 1</fullName>
    </alternativeName>
</protein>
<accession>P38212</accession>
<accession>D6VQ06</accession>
<feature type="chain" id="PRO_0000202466" description="Protein RCR1">
    <location>
        <begin position="1"/>
        <end position="213"/>
    </location>
</feature>
<feature type="topological domain" description="Lumenal" evidence="1">
    <location>
        <begin position="1"/>
        <end position="39"/>
    </location>
</feature>
<feature type="transmembrane region" description="Helical" evidence="1">
    <location>
        <begin position="40"/>
        <end position="62"/>
    </location>
</feature>
<feature type="topological domain" description="Cytoplasmic" evidence="1">
    <location>
        <begin position="63"/>
        <end position="213"/>
    </location>
</feature>
<feature type="region of interest" description="Disordered" evidence="2">
    <location>
        <begin position="190"/>
        <end position="213"/>
    </location>
</feature>
<feature type="short sequence motif" description="PY motif">
    <location>
        <begin position="104"/>
        <end position="107"/>
    </location>
</feature>
<feature type="compositionally biased region" description="Basic and acidic residues" evidence="2">
    <location>
        <begin position="203"/>
        <end position="213"/>
    </location>
</feature>
<feature type="mutagenesis site" description="Reduced interaction with WW domain of RSP5. No interaction with WW domain of RSP5; when in association with A-105." evidence="4">
    <original>PP</original>
    <variation>QA</variation>
    <location>
        <begin position="82"/>
        <end position="83"/>
    </location>
</feature>
<feature type="mutagenesis site" description="Reduced interaction with WW domain of RSP5. No interaction with WW domain of RSP5; when in association with 82-QA-83." evidence="4">
    <original>P</original>
    <variation>A</variation>
    <location>
        <position position="105"/>
    </location>
</feature>
<feature type="mutagenesis site" description="No effect in conferring Congo red resistance; when associated with A-208." evidence="4">
    <original>K</original>
    <variation>A</variation>
    <location>
        <position position="130"/>
    </location>
</feature>
<feature type="mutagenesis site" description="No effect in conferring Congo red resistance; when associated with A-130." evidence="4">
    <original>K</original>
    <variation>A</variation>
    <location>
        <position position="208"/>
    </location>
</feature>